<name>AROC_SULNB</name>
<accession>A6QCJ1</accession>
<comment type="function">
    <text evidence="1">Catalyzes the anti-1,4-elimination of the C-3 phosphate and the C-6 proR hydrogen from 5-enolpyruvylshikimate-3-phosphate (EPSP) to yield chorismate, which is the branch point compound that serves as the starting substrate for the three terminal pathways of aromatic amino acid biosynthesis. This reaction introduces a second double bond into the aromatic ring system.</text>
</comment>
<comment type="catalytic activity">
    <reaction evidence="1">
        <text>5-O-(1-carboxyvinyl)-3-phosphoshikimate = chorismate + phosphate</text>
        <dbReference type="Rhea" id="RHEA:21020"/>
        <dbReference type="ChEBI" id="CHEBI:29748"/>
        <dbReference type="ChEBI" id="CHEBI:43474"/>
        <dbReference type="ChEBI" id="CHEBI:57701"/>
        <dbReference type="EC" id="4.2.3.5"/>
    </reaction>
</comment>
<comment type="cofactor">
    <cofactor evidence="1">
        <name>FMNH2</name>
        <dbReference type="ChEBI" id="CHEBI:57618"/>
    </cofactor>
    <text evidence="1">Reduced FMN (FMNH(2)).</text>
</comment>
<comment type="pathway">
    <text evidence="1">Metabolic intermediate biosynthesis; chorismate biosynthesis; chorismate from D-erythrose 4-phosphate and phosphoenolpyruvate: step 7/7.</text>
</comment>
<comment type="subunit">
    <text evidence="1">Homotetramer.</text>
</comment>
<comment type="similarity">
    <text evidence="1">Belongs to the chorismate synthase family.</text>
</comment>
<sequence>MNTFGKKLTLTTFGESHGKAIGCILDGVPAGLRIDEAFIQSELDRRKPGKSKLETGRKEDDKVEILSGVFEGLSTGTPIAMIIFNTNQKSKDYDNVKDLFRPGHADFTYFHKYGIRDYRGGGRSSARETAARVAGGAVAKLMLKELGVEIQSGLCEVDGIKGNVQDFEYAKSSKLYALDPAVEAAQEEAILTAKENHDSVGGVVLTTATGVPVGLGEPLYYKLDAVLADAMMGINAAKAVEIGDGVASTHFKGSQNNDEITLQGFKSNHSGGTLGGISNGDTLIVKTHFKPTPSIFREQQTITTHDEEVVCNLKGRHDPCVAIRGAVVCEAMMALTLADMALLNMGKKMDHLKCIYG</sequence>
<proteinExistence type="inferred from homology"/>
<keyword id="KW-0028">Amino-acid biosynthesis</keyword>
<keyword id="KW-0057">Aromatic amino acid biosynthesis</keyword>
<keyword id="KW-0274">FAD</keyword>
<keyword id="KW-0285">Flavoprotein</keyword>
<keyword id="KW-0288">FMN</keyword>
<keyword id="KW-0456">Lyase</keyword>
<keyword id="KW-0521">NADP</keyword>
<dbReference type="EC" id="4.2.3.5" evidence="1"/>
<dbReference type="EMBL" id="AP009179">
    <property type="protein sequence ID" value="BAF73200.1"/>
    <property type="molecule type" value="Genomic_DNA"/>
</dbReference>
<dbReference type="RefSeq" id="WP_012084038.1">
    <property type="nucleotide sequence ID" value="NC_009663.1"/>
</dbReference>
<dbReference type="SMR" id="A6QCJ1"/>
<dbReference type="STRING" id="387093.SUN_2260"/>
<dbReference type="KEGG" id="sun:SUN_2260"/>
<dbReference type="eggNOG" id="COG0082">
    <property type="taxonomic scope" value="Bacteria"/>
</dbReference>
<dbReference type="HOGENOM" id="CLU_034547_0_2_7"/>
<dbReference type="OrthoDB" id="9771806at2"/>
<dbReference type="UniPathway" id="UPA00053">
    <property type="reaction ID" value="UER00090"/>
</dbReference>
<dbReference type="Proteomes" id="UP000006378">
    <property type="component" value="Chromosome"/>
</dbReference>
<dbReference type="GO" id="GO:0005829">
    <property type="term" value="C:cytosol"/>
    <property type="evidence" value="ECO:0007669"/>
    <property type="project" value="TreeGrafter"/>
</dbReference>
<dbReference type="GO" id="GO:0004107">
    <property type="term" value="F:chorismate synthase activity"/>
    <property type="evidence" value="ECO:0007669"/>
    <property type="project" value="UniProtKB-UniRule"/>
</dbReference>
<dbReference type="GO" id="GO:0010181">
    <property type="term" value="F:FMN binding"/>
    <property type="evidence" value="ECO:0007669"/>
    <property type="project" value="TreeGrafter"/>
</dbReference>
<dbReference type="GO" id="GO:0008652">
    <property type="term" value="P:amino acid biosynthetic process"/>
    <property type="evidence" value="ECO:0007669"/>
    <property type="project" value="UniProtKB-KW"/>
</dbReference>
<dbReference type="GO" id="GO:0009073">
    <property type="term" value="P:aromatic amino acid family biosynthetic process"/>
    <property type="evidence" value="ECO:0007669"/>
    <property type="project" value="UniProtKB-KW"/>
</dbReference>
<dbReference type="GO" id="GO:0009423">
    <property type="term" value="P:chorismate biosynthetic process"/>
    <property type="evidence" value="ECO:0007669"/>
    <property type="project" value="UniProtKB-UniRule"/>
</dbReference>
<dbReference type="CDD" id="cd07304">
    <property type="entry name" value="Chorismate_synthase"/>
    <property type="match status" value="1"/>
</dbReference>
<dbReference type="Gene3D" id="3.60.150.10">
    <property type="entry name" value="Chorismate synthase AroC"/>
    <property type="match status" value="1"/>
</dbReference>
<dbReference type="HAMAP" id="MF_00300">
    <property type="entry name" value="Chorismate_synth"/>
    <property type="match status" value="1"/>
</dbReference>
<dbReference type="InterPro" id="IPR000453">
    <property type="entry name" value="Chorismate_synth"/>
</dbReference>
<dbReference type="InterPro" id="IPR035904">
    <property type="entry name" value="Chorismate_synth_AroC_sf"/>
</dbReference>
<dbReference type="InterPro" id="IPR020541">
    <property type="entry name" value="Chorismate_synthase_CS"/>
</dbReference>
<dbReference type="NCBIfam" id="TIGR00033">
    <property type="entry name" value="aroC"/>
    <property type="match status" value="1"/>
</dbReference>
<dbReference type="NCBIfam" id="NF003793">
    <property type="entry name" value="PRK05382.1"/>
    <property type="match status" value="1"/>
</dbReference>
<dbReference type="PANTHER" id="PTHR21085">
    <property type="entry name" value="CHORISMATE SYNTHASE"/>
    <property type="match status" value="1"/>
</dbReference>
<dbReference type="PANTHER" id="PTHR21085:SF0">
    <property type="entry name" value="CHORISMATE SYNTHASE"/>
    <property type="match status" value="1"/>
</dbReference>
<dbReference type="Pfam" id="PF01264">
    <property type="entry name" value="Chorismate_synt"/>
    <property type="match status" value="1"/>
</dbReference>
<dbReference type="PIRSF" id="PIRSF001456">
    <property type="entry name" value="Chorismate_synth"/>
    <property type="match status" value="1"/>
</dbReference>
<dbReference type="SUPFAM" id="SSF103263">
    <property type="entry name" value="Chorismate synthase, AroC"/>
    <property type="match status" value="1"/>
</dbReference>
<dbReference type="PROSITE" id="PS00787">
    <property type="entry name" value="CHORISMATE_SYNTHASE_1"/>
    <property type="match status" value="1"/>
</dbReference>
<dbReference type="PROSITE" id="PS00788">
    <property type="entry name" value="CHORISMATE_SYNTHASE_2"/>
    <property type="match status" value="1"/>
</dbReference>
<dbReference type="PROSITE" id="PS00789">
    <property type="entry name" value="CHORISMATE_SYNTHASE_3"/>
    <property type="match status" value="1"/>
</dbReference>
<feature type="chain" id="PRO_1000022564" description="Chorismate synthase">
    <location>
        <begin position="1"/>
        <end position="357"/>
    </location>
</feature>
<feature type="binding site" evidence="1">
    <location>
        <position position="46"/>
    </location>
    <ligand>
        <name>NADP(+)</name>
        <dbReference type="ChEBI" id="CHEBI:58349"/>
    </ligand>
</feature>
<feature type="binding site" evidence="1">
    <location>
        <begin position="123"/>
        <end position="125"/>
    </location>
    <ligand>
        <name>FMN</name>
        <dbReference type="ChEBI" id="CHEBI:58210"/>
    </ligand>
</feature>
<feature type="binding site" evidence="1">
    <location>
        <begin position="235"/>
        <end position="236"/>
    </location>
    <ligand>
        <name>FMN</name>
        <dbReference type="ChEBI" id="CHEBI:58210"/>
    </ligand>
</feature>
<feature type="binding site" evidence="1">
    <location>
        <position position="275"/>
    </location>
    <ligand>
        <name>FMN</name>
        <dbReference type="ChEBI" id="CHEBI:58210"/>
    </ligand>
</feature>
<feature type="binding site" evidence="1">
    <location>
        <begin position="290"/>
        <end position="294"/>
    </location>
    <ligand>
        <name>FMN</name>
        <dbReference type="ChEBI" id="CHEBI:58210"/>
    </ligand>
</feature>
<feature type="binding site" evidence="1">
    <location>
        <position position="316"/>
    </location>
    <ligand>
        <name>FMN</name>
        <dbReference type="ChEBI" id="CHEBI:58210"/>
    </ligand>
</feature>
<gene>
    <name evidence="1" type="primary">aroC</name>
    <name type="ordered locus">SUN_2260</name>
</gene>
<reference key="1">
    <citation type="journal article" date="2007" name="Proc. Natl. Acad. Sci. U.S.A.">
        <title>Deep-sea vent epsilon-proteobacterial genomes provide insights into emergence of pathogens.</title>
        <authorList>
            <person name="Nakagawa S."/>
            <person name="Takaki Y."/>
            <person name="Shimamura S."/>
            <person name="Reysenbach A.-L."/>
            <person name="Takai K."/>
            <person name="Horikoshi K."/>
        </authorList>
    </citation>
    <scope>NUCLEOTIDE SEQUENCE [LARGE SCALE GENOMIC DNA]</scope>
    <source>
        <strain>NBC37-1</strain>
    </source>
</reference>
<organism>
    <name type="scientific">Sulfurovum sp. (strain NBC37-1)</name>
    <dbReference type="NCBI Taxonomy" id="387093"/>
    <lineage>
        <taxon>Bacteria</taxon>
        <taxon>Pseudomonadati</taxon>
        <taxon>Campylobacterota</taxon>
        <taxon>Epsilonproteobacteria</taxon>
        <taxon>Campylobacterales</taxon>
        <taxon>Sulfurovaceae</taxon>
        <taxon>Sulfurovum</taxon>
    </lineage>
</organism>
<evidence type="ECO:0000255" key="1">
    <source>
        <dbReference type="HAMAP-Rule" id="MF_00300"/>
    </source>
</evidence>
<protein>
    <recommendedName>
        <fullName evidence="1">Chorismate synthase</fullName>
        <shortName evidence="1">CS</shortName>
        <ecNumber evidence="1">4.2.3.5</ecNumber>
    </recommendedName>
    <alternativeName>
        <fullName evidence="1">5-enolpyruvylshikimate-3-phosphate phospholyase</fullName>
    </alternativeName>
</protein>